<sequence>MTDLVYEQPLNEKIRSYLRLEYLNKQLGNNLNHDHQHRCFYPLFSLCELSERCDYRNEVLKDIERNLLQLGKWQELDHVDSEQIEFYIQSLAQAREQLQRPERCGSQLKQDRFLSALRQRFGMPGACCNFDLPQLHFWLAKPWEERQQDYQAWISHFDPLLTPITLLLQLTRSTAHFDNATAHAGFYQGDSAQALSLVRVKVDAAHGCYPTISGHRNRYAIHFVQFDQQRHSDRSIEFLLATCA</sequence>
<feature type="chain" id="PRO_1000064923" description="Cell division protein ZapD">
    <location>
        <begin position="1"/>
        <end position="244"/>
    </location>
</feature>
<gene>
    <name evidence="1" type="primary">zapD</name>
    <name type="ordered locus">Shewmr7_3609</name>
</gene>
<keyword id="KW-0131">Cell cycle</keyword>
<keyword id="KW-0132">Cell division</keyword>
<keyword id="KW-0963">Cytoplasm</keyword>
<keyword id="KW-0717">Septation</keyword>
<comment type="function">
    <text evidence="1">Cell division factor that enhances FtsZ-ring assembly. Directly interacts with FtsZ and promotes bundling of FtsZ protofilaments, with a reduction in FtsZ GTPase activity.</text>
</comment>
<comment type="subunit">
    <text evidence="1">Interacts with FtsZ.</text>
</comment>
<comment type="subcellular location">
    <subcellularLocation>
        <location evidence="1">Cytoplasm</location>
    </subcellularLocation>
    <text evidence="1">Localizes to mid-cell in an FtsZ-dependent manner.</text>
</comment>
<comment type="similarity">
    <text evidence="1">Belongs to the ZapD family.</text>
</comment>
<dbReference type="EMBL" id="CP000444">
    <property type="protein sequence ID" value="ABI44589.1"/>
    <property type="molecule type" value="Genomic_DNA"/>
</dbReference>
<dbReference type="SMR" id="Q0HQL6"/>
<dbReference type="KEGG" id="shm:Shewmr7_3609"/>
<dbReference type="HOGENOM" id="CLU_076303_0_0_6"/>
<dbReference type="GO" id="GO:0032153">
    <property type="term" value="C:cell division site"/>
    <property type="evidence" value="ECO:0007669"/>
    <property type="project" value="TreeGrafter"/>
</dbReference>
<dbReference type="GO" id="GO:0005737">
    <property type="term" value="C:cytoplasm"/>
    <property type="evidence" value="ECO:0007669"/>
    <property type="project" value="UniProtKB-SubCell"/>
</dbReference>
<dbReference type="GO" id="GO:0000917">
    <property type="term" value="P:division septum assembly"/>
    <property type="evidence" value="ECO:0007669"/>
    <property type="project" value="UniProtKB-KW"/>
</dbReference>
<dbReference type="GO" id="GO:0043093">
    <property type="term" value="P:FtsZ-dependent cytokinesis"/>
    <property type="evidence" value="ECO:0007669"/>
    <property type="project" value="UniProtKB-UniRule"/>
</dbReference>
<dbReference type="Gene3D" id="1.10.3900.10">
    <property type="entry name" value="YacF-like"/>
    <property type="match status" value="1"/>
</dbReference>
<dbReference type="Gene3D" id="2.60.440.10">
    <property type="entry name" value="YacF-like domains"/>
    <property type="match status" value="1"/>
</dbReference>
<dbReference type="HAMAP" id="MF_01092">
    <property type="entry name" value="ZapD"/>
    <property type="match status" value="1"/>
</dbReference>
<dbReference type="InterPro" id="IPR009777">
    <property type="entry name" value="ZapD"/>
</dbReference>
<dbReference type="InterPro" id="IPR027462">
    <property type="entry name" value="ZapD_C"/>
</dbReference>
<dbReference type="InterPro" id="IPR036268">
    <property type="entry name" value="ZapD_sf"/>
</dbReference>
<dbReference type="NCBIfam" id="NF003654">
    <property type="entry name" value="PRK05287.1-2"/>
    <property type="match status" value="1"/>
</dbReference>
<dbReference type="NCBIfam" id="NF003655">
    <property type="entry name" value="PRK05287.1-3"/>
    <property type="match status" value="1"/>
</dbReference>
<dbReference type="PANTHER" id="PTHR39455">
    <property type="entry name" value="CELL DIVISION PROTEIN ZAPD"/>
    <property type="match status" value="1"/>
</dbReference>
<dbReference type="PANTHER" id="PTHR39455:SF1">
    <property type="entry name" value="CELL DIVISION PROTEIN ZAPD"/>
    <property type="match status" value="1"/>
</dbReference>
<dbReference type="Pfam" id="PF07072">
    <property type="entry name" value="ZapD"/>
    <property type="match status" value="1"/>
</dbReference>
<dbReference type="SUPFAM" id="SSF160950">
    <property type="entry name" value="YacF-like"/>
    <property type="match status" value="1"/>
</dbReference>
<name>ZAPD_SHESR</name>
<evidence type="ECO:0000255" key="1">
    <source>
        <dbReference type="HAMAP-Rule" id="MF_01092"/>
    </source>
</evidence>
<protein>
    <recommendedName>
        <fullName evidence="1">Cell division protein ZapD</fullName>
    </recommendedName>
    <alternativeName>
        <fullName evidence="1">Z ring-associated protein D</fullName>
    </alternativeName>
</protein>
<reference key="1">
    <citation type="submission" date="2006-08" db="EMBL/GenBank/DDBJ databases">
        <title>Complete sequence of chromosome 1 of Shewanella sp. MR-7.</title>
        <authorList>
            <person name="Copeland A."/>
            <person name="Lucas S."/>
            <person name="Lapidus A."/>
            <person name="Barry K."/>
            <person name="Detter J.C."/>
            <person name="Glavina del Rio T."/>
            <person name="Hammon N."/>
            <person name="Israni S."/>
            <person name="Dalin E."/>
            <person name="Tice H."/>
            <person name="Pitluck S."/>
            <person name="Kiss H."/>
            <person name="Brettin T."/>
            <person name="Bruce D."/>
            <person name="Han C."/>
            <person name="Tapia R."/>
            <person name="Gilna P."/>
            <person name="Schmutz J."/>
            <person name="Larimer F."/>
            <person name="Land M."/>
            <person name="Hauser L."/>
            <person name="Kyrpides N."/>
            <person name="Mikhailova N."/>
            <person name="Nealson K."/>
            <person name="Konstantinidis K."/>
            <person name="Klappenbach J."/>
            <person name="Tiedje J."/>
            <person name="Richardson P."/>
        </authorList>
    </citation>
    <scope>NUCLEOTIDE SEQUENCE [LARGE SCALE GENOMIC DNA]</scope>
    <source>
        <strain>MR-7</strain>
    </source>
</reference>
<accession>Q0HQL6</accession>
<organism>
    <name type="scientific">Shewanella sp. (strain MR-7)</name>
    <dbReference type="NCBI Taxonomy" id="60481"/>
    <lineage>
        <taxon>Bacteria</taxon>
        <taxon>Pseudomonadati</taxon>
        <taxon>Pseudomonadota</taxon>
        <taxon>Gammaproteobacteria</taxon>
        <taxon>Alteromonadales</taxon>
        <taxon>Shewanellaceae</taxon>
        <taxon>Shewanella</taxon>
    </lineage>
</organism>
<proteinExistence type="inferred from homology"/>